<gene>
    <name type="ORF">POPTRDRAFT_907513</name>
</gene>
<feature type="chain" id="PRO_0000376092" description="Casparian strip membrane protein 3">
    <location>
        <begin position="1"/>
        <end position="197"/>
    </location>
</feature>
<feature type="topological domain" description="Cytoplasmic" evidence="2">
    <location>
        <begin position="1"/>
        <end position="35"/>
    </location>
</feature>
<feature type="transmembrane region" description="Helical" evidence="2">
    <location>
        <begin position="36"/>
        <end position="56"/>
    </location>
</feature>
<feature type="topological domain" description="Extracellular" evidence="2">
    <location>
        <begin position="57"/>
        <end position="85"/>
    </location>
</feature>
<feature type="transmembrane region" description="Helical" evidence="2">
    <location>
        <begin position="86"/>
        <end position="106"/>
    </location>
</feature>
<feature type="topological domain" description="Cytoplasmic" evidence="2">
    <location>
        <begin position="107"/>
        <end position="119"/>
    </location>
</feature>
<feature type="transmembrane region" description="Helical" evidence="2">
    <location>
        <begin position="120"/>
        <end position="140"/>
    </location>
</feature>
<feature type="topological domain" description="Extracellular" evidence="2">
    <location>
        <begin position="141"/>
        <end position="171"/>
    </location>
</feature>
<feature type="transmembrane region" description="Helical" evidence="2">
    <location>
        <begin position="172"/>
        <end position="192"/>
    </location>
</feature>
<feature type="topological domain" description="Cytoplasmic" evidence="2">
    <location>
        <begin position="193"/>
        <end position="197"/>
    </location>
</feature>
<feature type="glycosylation site" description="N-linked (GlcNAc...) asparagine" evidence="2">
    <location>
        <position position="150"/>
    </location>
</feature>
<name>CASP3_POPTR</name>
<sequence length="197" mass="20491">MSARVDIPADTSAAAKGTAPLIAASTHVKGGYKKGLAIFDLVLRLGAVVTALAAAATMGTTDQTLPFFTQFFQFQASYDDLPTFQFFVIAMAIVSGYLVLSLPFSIVAIIRPHATGPRLLLIILDTVALTLNTAAAAAAVAIVDLAQNGNSSANWLGICQQFGDFCQKASGAVVASFIAAGVLLFLIVISALALRKR</sequence>
<proteinExistence type="inferred from homology"/>
<reference key="1">
    <citation type="journal article" date="2006" name="Science">
        <title>The genome of black cottonwood, Populus trichocarpa (Torr. &amp; Gray).</title>
        <authorList>
            <person name="Tuskan G.A."/>
            <person name="Difazio S."/>
            <person name="Jansson S."/>
            <person name="Bohlmann J."/>
            <person name="Grigoriev I."/>
            <person name="Hellsten U."/>
            <person name="Putnam N."/>
            <person name="Ralph S."/>
            <person name="Rombauts S."/>
            <person name="Salamov A."/>
            <person name="Schein J."/>
            <person name="Sterck L."/>
            <person name="Aerts A."/>
            <person name="Bhalerao R.R."/>
            <person name="Bhalerao R.P."/>
            <person name="Blaudez D."/>
            <person name="Boerjan W."/>
            <person name="Brun A."/>
            <person name="Brunner A."/>
            <person name="Busov V."/>
            <person name="Campbell M."/>
            <person name="Carlson J."/>
            <person name="Chalot M."/>
            <person name="Chapman J."/>
            <person name="Chen G.-L."/>
            <person name="Cooper D."/>
            <person name="Coutinho P.M."/>
            <person name="Couturier J."/>
            <person name="Covert S."/>
            <person name="Cronk Q."/>
            <person name="Cunningham R."/>
            <person name="Davis J."/>
            <person name="Degroeve S."/>
            <person name="Dejardin A."/>
            <person name="dePamphilis C.W."/>
            <person name="Detter J."/>
            <person name="Dirks B."/>
            <person name="Dubchak I."/>
            <person name="Duplessis S."/>
            <person name="Ehlting J."/>
            <person name="Ellis B."/>
            <person name="Gendler K."/>
            <person name="Goodstein D."/>
            <person name="Gribskov M."/>
            <person name="Grimwood J."/>
            <person name="Groover A."/>
            <person name="Gunter L."/>
            <person name="Hamberger B."/>
            <person name="Heinze B."/>
            <person name="Helariutta Y."/>
            <person name="Henrissat B."/>
            <person name="Holligan D."/>
            <person name="Holt R."/>
            <person name="Huang W."/>
            <person name="Islam-Faridi N."/>
            <person name="Jones S."/>
            <person name="Jones-Rhoades M."/>
            <person name="Jorgensen R."/>
            <person name="Joshi C."/>
            <person name="Kangasjaervi J."/>
            <person name="Karlsson J."/>
            <person name="Kelleher C."/>
            <person name="Kirkpatrick R."/>
            <person name="Kirst M."/>
            <person name="Kohler A."/>
            <person name="Kalluri U."/>
            <person name="Larimer F."/>
            <person name="Leebens-Mack J."/>
            <person name="Leple J.-C."/>
            <person name="Locascio P."/>
            <person name="Lou Y."/>
            <person name="Lucas S."/>
            <person name="Martin F."/>
            <person name="Montanini B."/>
            <person name="Napoli C."/>
            <person name="Nelson D.R."/>
            <person name="Nelson C."/>
            <person name="Nieminen K."/>
            <person name="Nilsson O."/>
            <person name="Pereda V."/>
            <person name="Peter G."/>
            <person name="Philippe R."/>
            <person name="Pilate G."/>
            <person name="Poliakov A."/>
            <person name="Razumovskaya J."/>
            <person name="Richardson P."/>
            <person name="Rinaldi C."/>
            <person name="Ritland K."/>
            <person name="Rouze P."/>
            <person name="Ryaboy D."/>
            <person name="Schmutz J."/>
            <person name="Schrader J."/>
            <person name="Segerman B."/>
            <person name="Shin H."/>
            <person name="Siddiqui A."/>
            <person name="Sterky F."/>
            <person name="Terry A."/>
            <person name="Tsai C.-J."/>
            <person name="Uberbacher E."/>
            <person name="Unneberg P."/>
            <person name="Vahala J."/>
            <person name="Wall K."/>
            <person name="Wessler S."/>
            <person name="Yang G."/>
            <person name="Yin T."/>
            <person name="Douglas C."/>
            <person name="Marra M."/>
            <person name="Sandberg G."/>
            <person name="Van de Peer Y."/>
            <person name="Rokhsar D.S."/>
        </authorList>
    </citation>
    <scope>NUCLEOTIDE SEQUENCE [LARGE SCALE GENOMIC DNA]</scope>
    <source>
        <strain>cv. Nisqually</strain>
    </source>
</reference>
<reference key="2">
    <citation type="submission" date="2008-12" db="EMBL/GenBank/DDBJ databases">
        <authorList>
            <consortium name="US DOE Joint Genome Institute (JGI-PGF)"/>
            <person name="Grigoriev I.V."/>
            <person name="Terry A."/>
            <person name="Salamov A.A."/>
            <person name="Otillar R."/>
            <person name="Lou Y."/>
            <person name="Lucas S."/>
            <person name="Hammon N."/>
            <person name="Glavina del Rio T."/>
            <person name="Detter J."/>
            <person name="Kalin E."/>
            <person name="Tice H."/>
            <person name="Pitluck S."/>
            <person name="Chapman J."/>
            <person name="Putnam N.H."/>
            <person name="Brunner A."/>
            <person name="Busov V."/>
            <person name="Campbell M."/>
            <person name="Chalot M."/>
            <person name="Covert S."/>
            <person name="Davis J."/>
            <person name="DiFazio S."/>
            <person name="Gribskov M."/>
            <person name="Gunter L."/>
            <person name="Hamberger B."/>
            <person name="Jansson S."/>
            <person name="Joshi C."/>
            <person name="Larimer F."/>
            <person name="Martin F."/>
            <person name="Napoli C."/>
            <person name="Nelson D."/>
            <person name="Ralph S."/>
            <person name="Rombauts S."/>
            <person name="Rouze P."/>
            <person name="Schrader J."/>
            <person name="Tsai C."/>
            <person name="Vahala J."/>
            <person name="Tuskan G."/>
            <person name="Rokhsar D."/>
        </authorList>
    </citation>
    <scope>GENOME REANNOTATION</scope>
    <source>
        <strain>cv. Nisqually</strain>
    </source>
</reference>
<reference key="3">
    <citation type="journal article" date="2014" name="Plant Physiol.">
        <title>Functional and evolutionary analysis of the CASPARIAN STRIP MEMBRANE DOMAIN PROTEIN family.</title>
        <authorList>
            <person name="Roppolo D."/>
            <person name="Boeckmann B."/>
            <person name="Pfister A."/>
            <person name="Boutet E."/>
            <person name="Rubio M.C."/>
            <person name="Denervaud-Tendon V."/>
            <person name="Vermeer J.E."/>
            <person name="Gheyselinck J."/>
            <person name="Xenarios I."/>
            <person name="Geldner N."/>
        </authorList>
    </citation>
    <scope>GENE FAMILY</scope>
    <scope>NOMENCLATURE</scope>
</reference>
<organism>
    <name type="scientific">Populus trichocarpa</name>
    <name type="common">Western balsam poplar</name>
    <name type="synonym">Populus balsamifera subsp. trichocarpa</name>
    <dbReference type="NCBI Taxonomy" id="3694"/>
    <lineage>
        <taxon>Eukaryota</taxon>
        <taxon>Viridiplantae</taxon>
        <taxon>Streptophyta</taxon>
        <taxon>Embryophyta</taxon>
        <taxon>Tracheophyta</taxon>
        <taxon>Spermatophyta</taxon>
        <taxon>Magnoliopsida</taxon>
        <taxon>eudicotyledons</taxon>
        <taxon>Gunneridae</taxon>
        <taxon>Pentapetalae</taxon>
        <taxon>rosids</taxon>
        <taxon>fabids</taxon>
        <taxon>Malpighiales</taxon>
        <taxon>Salicaceae</taxon>
        <taxon>Saliceae</taxon>
        <taxon>Populus</taxon>
    </lineage>
</organism>
<dbReference type="EMBL" id="CM009305">
    <property type="protein sequence ID" value="EEF05170.1"/>
    <property type="molecule type" value="Genomic_DNA"/>
</dbReference>
<dbReference type="RefSeq" id="XP_002323409.1">
    <property type="nucleotide sequence ID" value="XM_002323373.1"/>
</dbReference>
<dbReference type="FunCoup" id="B9IIR4">
    <property type="interactions" value="384"/>
</dbReference>
<dbReference type="STRING" id="3694.B9IIR4"/>
<dbReference type="EnsemblPlants" id="Potri.016G075300.1.v4.1">
    <property type="protein sequence ID" value="Potri.016G075300.1.v4.1"/>
    <property type="gene ID" value="Potri.016G075300.v4.1"/>
</dbReference>
<dbReference type="Gramene" id="Potri.016G075300.1.v4.1">
    <property type="protein sequence ID" value="Potri.016G075300.1.v4.1"/>
    <property type="gene ID" value="Potri.016G075300.v4.1"/>
</dbReference>
<dbReference type="KEGG" id="pop:7469971"/>
<dbReference type="eggNOG" id="ENOG502QZV7">
    <property type="taxonomic scope" value="Eukaryota"/>
</dbReference>
<dbReference type="HOGENOM" id="CLU_066104_3_1_1"/>
<dbReference type="InParanoid" id="B9IIR4"/>
<dbReference type="OMA" id="EFFLIAM"/>
<dbReference type="OrthoDB" id="753675at2759"/>
<dbReference type="Proteomes" id="UP000006729">
    <property type="component" value="Chromosome 16"/>
</dbReference>
<dbReference type="ExpressionAtlas" id="B9IIR4">
    <property type="expression patterns" value="baseline and differential"/>
</dbReference>
<dbReference type="GO" id="GO:0048226">
    <property type="term" value="C:Casparian strip"/>
    <property type="evidence" value="ECO:0000318"/>
    <property type="project" value="GO_Central"/>
</dbReference>
<dbReference type="GO" id="GO:0005886">
    <property type="term" value="C:plasma membrane"/>
    <property type="evidence" value="ECO:0000318"/>
    <property type="project" value="GO_Central"/>
</dbReference>
<dbReference type="GO" id="GO:0042545">
    <property type="term" value="P:cell wall modification"/>
    <property type="evidence" value="ECO:0000318"/>
    <property type="project" value="GO_Central"/>
</dbReference>
<dbReference type="GO" id="GO:0007043">
    <property type="term" value="P:cell-cell junction assembly"/>
    <property type="evidence" value="ECO:0000318"/>
    <property type="project" value="GO_Central"/>
</dbReference>
<dbReference type="InterPro" id="IPR006459">
    <property type="entry name" value="CASP/CASPL"/>
</dbReference>
<dbReference type="InterPro" id="IPR006702">
    <property type="entry name" value="CASP_dom"/>
</dbReference>
<dbReference type="InterPro" id="IPR044173">
    <property type="entry name" value="CASPL"/>
</dbReference>
<dbReference type="NCBIfam" id="TIGR01569">
    <property type="entry name" value="A_tha_TIGR01569"/>
    <property type="match status" value="1"/>
</dbReference>
<dbReference type="PANTHER" id="PTHR36488:SF11">
    <property type="entry name" value="CASP-LIKE PROTEIN"/>
    <property type="match status" value="1"/>
</dbReference>
<dbReference type="PANTHER" id="PTHR36488">
    <property type="entry name" value="CASP-LIKE PROTEIN 1U1"/>
    <property type="match status" value="1"/>
</dbReference>
<dbReference type="Pfam" id="PF04535">
    <property type="entry name" value="CASP_dom"/>
    <property type="match status" value="1"/>
</dbReference>
<comment type="function">
    <text evidence="1">Regulates membrane-cell wall junctions and localized cell wall deposition. Required for establishment of the Casparian strip membrane domain (CSD) and the subsequent formation of Casparian strips, a cell wall modification of the root endodermis that determines an apoplastic barrier between the intraorganismal apoplasm and the extraorganismal apoplasm and prevents lateral diffusion (By similarity).</text>
</comment>
<comment type="subunit">
    <text evidence="1">Homodimer and heterodimers.</text>
</comment>
<comment type="subcellular location">
    <subcellularLocation>
        <location evidence="1">Cell membrane</location>
        <topology evidence="1">Multi-pass membrane protein</topology>
    </subcellularLocation>
    <text evidence="1">Very restricted localization following a belt shape within the plasma membrane which coincides with the position of the Casparian strip membrane domain in the root endodermis.</text>
</comment>
<comment type="similarity">
    <text evidence="3">Belongs to the Casparian strip membrane proteins (CASP) family.</text>
</comment>
<protein>
    <recommendedName>
        <fullName>Casparian strip membrane protein 3</fullName>
        <shortName>PtCASP3</shortName>
    </recommendedName>
</protein>
<accession>B9IIR4</accession>
<evidence type="ECO:0000250" key="1"/>
<evidence type="ECO:0000255" key="2"/>
<evidence type="ECO:0000305" key="3"/>
<keyword id="KW-1003">Cell membrane</keyword>
<keyword id="KW-0961">Cell wall biogenesis/degradation</keyword>
<keyword id="KW-0325">Glycoprotein</keyword>
<keyword id="KW-0472">Membrane</keyword>
<keyword id="KW-1185">Reference proteome</keyword>
<keyword id="KW-0812">Transmembrane</keyword>
<keyword id="KW-1133">Transmembrane helix</keyword>